<evidence type="ECO:0000250" key="1"/>
<evidence type="ECO:0000255" key="2"/>
<evidence type="ECO:0000305" key="3"/>
<sequence>MGAVLGACTAASCAANLACCCGSAACSLCCNFCPTCKNSTSTRIVYSIFLLFGLVVSCIVLAPGIRHKLNQIPYLCEHASETCDSIVGYLAVYRVCFGLAAFFLLFCLLMYGVTSSRDVRSKIQNGFWGIKILLFLGAIVAAFFIPQGKFSEVWMYFGLIGSFLFILIQLVLLVDFAHTWNSSWVGRMEESGSKVWAVLLLCATFLMYGFCVAGIVCLYVYFTYSQESSCHTNKFFISFNLILCIIASVLAIHPKVQERLPTSGLLQASVISLYTVYLTWSALSFQPDKNCNGFYETHITLAGMDSQAIIGVILMFVMVVYASVRTASSSQVGKLGMSSPKHSSALDKETTVLSEGDETRSDVGLVEEGGEGRRVYDDEDGGVAYSYSFYHFMLMLASLYIMMTLTNWYKPVGSDFSKLQYSETAVWVKIASSWLCQLIYIWTLLAPALFPDRDFS</sequence>
<proteinExistence type="inferred from homology"/>
<reference key="1">
    <citation type="journal article" date="2007" name="Science">
        <title>Sea anemone genome reveals ancestral eumetazoan gene repertoire and genomic organization.</title>
        <authorList>
            <person name="Putnam N.H."/>
            <person name="Srivastava M."/>
            <person name="Hellsten U."/>
            <person name="Dirks B."/>
            <person name="Chapman J."/>
            <person name="Salamov A."/>
            <person name="Terry A."/>
            <person name="Shapiro H."/>
            <person name="Lindquist E."/>
            <person name="Kapitonov V.V."/>
            <person name="Jurka J."/>
            <person name="Genikhovich G."/>
            <person name="Grigoriev I.V."/>
            <person name="Lucas S.M."/>
            <person name="Steele R.E."/>
            <person name="Finnerty J.R."/>
            <person name="Technau U."/>
            <person name="Martindale M.Q."/>
            <person name="Rokhsar D.S."/>
        </authorList>
    </citation>
    <scope>NUCLEOTIDE SEQUENCE [LARGE SCALE GENOMIC DNA]</scope>
    <source>
        <strain>CH2 X CH6</strain>
    </source>
</reference>
<accession>A7S4N4</accession>
<dbReference type="EMBL" id="DS469579">
    <property type="protein sequence ID" value="EDO41353.1"/>
    <property type="molecule type" value="Genomic_DNA"/>
</dbReference>
<dbReference type="RefSeq" id="XP_001633416.1">
    <property type="nucleotide sequence ID" value="XM_001633366.1"/>
</dbReference>
<dbReference type="SMR" id="A7S4N4"/>
<dbReference type="EnsemblMetazoa" id="EDO41353">
    <property type="protein sequence ID" value="EDO41353"/>
    <property type="gene ID" value="NEMVEDRAFT_v1g242820"/>
</dbReference>
<dbReference type="GeneID" id="5513123"/>
<dbReference type="KEGG" id="nve:5513123"/>
<dbReference type="eggNOG" id="KOG2592">
    <property type="taxonomic scope" value="Eukaryota"/>
</dbReference>
<dbReference type="HOGENOM" id="CLU_029574_5_0_1"/>
<dbReference type="InParanoid" id="A7S4N4"/>
<dbReference type="OMA" id="YNPWMAR"/>
<dbReference type="OrthoDB" id="5963193at2759"/>
<dbReference type="PhylomeDB" id="A7S4N4"/>
<dbReference type="Proteomes" id="UP000001593">
    <property type="component" value="Unassembled WGS sequence"/>
</dbReference>
<dbReference type="GO" id="GO:0005789">
    <property type="term" value="C:endoplasmic reticulum membrane"/>
    <property type="evidence" value="ECO:0007669"/>
    <property type="project" value="UniProtKB-SubCell"/>
</dbReference>
<dbReference type="GO" id="GO:0016020">
    <property type="term" value="C:membrane"/>
    <property type="evidence" value="ECO:0000318"/>
    <property type="project" value="GO_Central"/>
</dbReference>
<dbReference type="GO" id="GO:0008654">
    <property type="term" value="P:phospholipid biosynthetic process"/>
    <property type="evidence" value="ECO:0007669"/>
    <property type="project" value="UniProtKB-KW"/>
</dbReference>
<dbReference type="InterPro" id="IPR005016">
    <property type="entry name" value="TDE1/TMS"/>
</dbReference>
<dbReference type="PANTHER" id="PTHR10383">
    <property type="entry name" value="SERINE INCORPORATOR"/>
    <property type="match status" value="1"/>
</dbReference>
<dbReference type="PANTHER" id="PTHR10383:SF9">
    <property type="entry name" value="SERINE INCORPORATOR, ISOFORM F"/>
    <property type="match status" value="1"/>
</dbReference>
<dbReference type="Pfam" id="PF03348">
    <property type="entry name" value="Serinc"/>
    <property type="match status" value="1"/>
</dbReference>
<feature type="chain" id="PRO_0000342157" description="Probable serine incorporator">
    <location>
        <begin position="1"/>
        <end position="456"/>
    </location>
</feature>
<feature type="transmembrane region" description="Helical" evidence="2">
    <location>
        <begin position="10"/>
        <end position="32"/>
    </location>
</feature>
<feature type="transmembrane region" description="Helical" evidence="2">
    <location>
        <begin position="44"/>
        <end position="64"/>
    </location>
</feature>
<feature type="transmembrane region" description="Helical" evidence="2">
    <location>
        <begin position="95"/>
        <end position="115"/>
    </location>
</feature>
<feature type="transmembrane region" description="Helical" evidence="2">
    <location>
        <begin position="126"/>
        <end position="146"/>
    </location>
</feature>
<feature type="transmembrane region" description="Helical" evidence="2">
    <location>
        <begin position="153"/>
        <end position="173"/>
    </location>
</feature>
<feature type="transmembrane region" description="Helical" evidence="2">
    <location>
        <begin position="195"/>
        <end position="215"/>
    </location>
</feature>
<feature type="transmembrane region" description="Helical" evidence="2">
    <location>
        <begin position="234"/>
        <end position="254"/>
    </location>
</feature>
<feature type="transmembrane region" description="Helical" evidence="2">
    <location>
        <begin position="265"/>
        <end position="285"/>
    </location>
</feature>
<feature type="transmembrane region" description="Helical" evidence="2">
    <location>
        <begin position="301"/>
        <end position="321"/>
    </location>
</feature>
<feature type="transmembrane region" description="Helical" evidence="2">
    <location>
        <begin position="383"/>
        <end position="403"/>
    </location>
</feature>
<feature type="transmembrane region" description="Helical" evidence="2">
    <location>
        <begin position="430"/>
        <end position="450"/>
    </location>
</feature>
<comment type="function">
    <text evidence="1">Enhances the incorporation of serine into phosphatidylserine and sphingolipids.</text>
</comment>
<comment type="subcellular location">
    <subcellularLocation>
        <location evidence="1">Endoplasmic reticulum membrane</location>
        <topology evidence="1">Multi-pass membrane protein</topology>
    </subcellularLocation>
</comment>
<comment type="similarity">
    <text evidence="3">Belongs to the TDE1 family.</text>
</comment>
<protein>
    <recommendedName>
        <fullName>Probable serine incorporator</fullName>
    </recommendedName>
</protein>
<name>SERIC_NEMVE</name>
<keyword id="KW-0256">Endoplasmic reticulum</keyword>
<keyword id="KW-0444">Lipid biosynthesis</keyword>
<keyword id="KW-0443">Lipid metabolism</keyword>
<keyword id="KW-0472">Membrane</keyword>
<keyword id="KW-0594">Phospholipid biosynthesis</keyword>
<keyword id="KW-1208">Phospholipid metabolism</keyword>
<keyword id="KW-1185">Reference proteome</keyword>
<keyword id="KW-0812">Transmembrane</keyword>
<keyword id="KW-1133">Transmembrane helix</keyword>
<organism>
    <name type="scientific">Nematostella vectensis</name>
    <name type="common">Starlet sea anemone</name>
    <dbReference type="NCBI Taxonomy" id="45351"/>
    <lineage>
        <taxon>Eukaryota</taxon>
        <taxon>Metazoa</taxon>
        <taxon>Cnidaria</taxon>
        <taxon>Anthozoa</taxon>
        <taxon>Hexacorallia</taxon>
        <taxon>Actiniaria</taxon>
        <taxon>Edwardsiidae</taxon>
        <taxon>Nematostella</taxon>
    </lineage>
</organism>
<gene>
    <name type="primary">serinc</name>
    <name type="ORF">v1g242820</name>
</gene>